<organism>
    <name type="scientific">Aspergillus fumigatus (strain ATCC MYA-4609 / CBS 101355 / FGSC A1100 / Af293)</name>
    <name type="common">Neosartorya fumigata</name>
    <dbReference type="NCBI Taxonomy" id="330879"/>
    <lineage>
        <taxon>Eukaryota</taxon>
        <taxon>Fungi</taxon>
        <taxon>Dikarya</taxon>
        <taxon>Ascomycota</taxon>
        <taxon>Pezizomycotina</taxon>
        <taxon>Eurotiomycetes</taxon>
        <taxon>Eurotiomycetidae</taxon>
        <taxon>Eurotiales</taxon>
        <taxon>Aspergillaceae</taxon>
        <taxon>Aspergillus</taxon>
        <taxon>Aspergillus subgen. Fumigati</taxon>
    </lineage>
</organism>
<dbReference type="EC" id="1.3.1.-" evidence="4"/>
<dbReference type="EMBL" id="AAHF01000007">
    <property type="protein sequence ID" value="EAL88027.1"/>
    <property type="molecule type" value="Genomic_DNA"/>
</dbReference>
<dbReference type="RefSeq" id="XP_750065.1">
    <property type="nucleotide sequence ID" value="XM_744972.1"/>
</dbReference>
<dbReference type="SMR" id="Q4WKA5"/>
<dbReference type="FunCoup" id="Q4WKA5">
    <property type="interactions" value="488"/>
</dbReference>
<dbReference type="STRING" id="330879.Q4WKA5"/>
<dbReference type="GlyCosmos" id="Q4WKA5">
    <property type="glycosylation" value="2 sites, No reported glycans"/>
</dbReference>
<dbReference type="EnsemblFungi" id="EAL88027">
    <property type="protein sequence ID" value="EAL88027"/>
    <property type="gene ID" value="AFUA_1G03150"/>
</dbReference>
<dbReference type="GeneID" id="3507893"/>
<dbReference type="KEGG" id="afm:AFUA_1G03150"/>
<dbReference type="VEuPathDB" id="FungiDB:Afu1g03150"/>
<dbReference type="eggNOG" id="KOG1435">
    <property type="taxonomic scope" value="Eukaryota"/>
</dbReference>
<dbReference type="HOGENOM" id="CLU_015631_0_3_1"/>
<dbReference type="InParanoid" id="Q4WKA5"/>
<dbReference type="OMA" id="PNYMGDL"/>
<dbReference type="OrthoDB" id="10262235at2759"/>
<dbReference type="UniPathway" id="UPA00768"/>
<dbReference type="Proteomes" id="UP000002530">
    <property type="component" value="Chromosome 1"/>
</dbReference>
<dbReference type="GO" id="GO:0005789">
    <property type="term" value="C:endoplasmic reticulum membrane"/>
    <property type="evidence" value="ECO:0000318"/>
    <property type="project" value="GO_Central"/>
</dbReference>
<dbReference type="GO" id="GO:0050613">
    <property type="term" value="F:Delta14-sterol reductase activity"/>
    <property type="evidence" value="ECO:0000318"/>
    <property type="project" value="GO_Central"/>
</dbReference>
<dbReference type="GO" id="GO:0006696">
    <property type="term" value="P:ergosterol biosynthetic process"/>
    <property type="evidence" value="ECO:0000318"/>
    <property type="project" value="GO_Central"/>
</dbReference>
<dbReference type="FunFam" id="1.20.120.1630:FF:000008">
    <property type="entry name" value="C-14 sterol reductase"/>
    <property type="match status" value="1"/>
</dbReference>
<dbReference type="Gene3D" id="1.20.120.1630">
    <property type="match status" value="1"/>
</dbReference>
<dbReference type="InterPro" id="IPR001171">
    <property type="entry name" value="ERG24_DHCR-like"/>
</dbReference>
<dbReference type="InterPro" id="IPR018083">
    <property type="entry name" value="Sterol_reductase_CS"/>
</dbReference>
<dbReference type="PANTHER" id="PTHR21257">
    <property type="entry name" value="DELTA(14)-STEROL REDUCTASE"/>
    <property type="match status" value="1"/>
</dbReference>
<dbReference type="PANTHER" id="PTHR21257:SF52">
    <property type="entry name" value="DELTA(14)-STEROL REDUCTASE TM7SF2"/>
    <property type="match status" value="1"/>
</dbReference>
<dbReference type="Pfam" id="PF01222">
    <property type="entry name" value="ERG4_ERG24"/>
    <property type="match status" value="1"/>
</dbReference>
<dbReference type="PROSITE" id="PS01017">
    <property type="entry name" value="STEROL_REDUCT_1"/>
    <property type="match status" value="1"/>
</dbReference>
<dbReference type="PROSITE" id="PS01018">
    <property type="entry name" value="STEROL_REDUCT_2"/>
    <property type="match status" value="1"/>
</dbReference>
<keyword id="KW-0256">Endoplasmic reticulum</keyword>
<keyword id="KW-0325">Glycoprotein</keyword>
<keyword id="KW-0444">Lipid biosynthesis</keyword>
<keyword id="KW-0443">Lipid metabolism</keyword>
<keyword id="KW-0472">Membrane</keyword>
<keyword id="KW-0521">NADP</keyword>
<keyword id="KW-0560">Oxidoreductase</keyword>
<keyword id="KW-1185">Reference proteome</keyword>
<keyword id="KW-0752">Steroid biosynthesis</keyword>
<keyword id="KW-0753">Steroid metabolism</keyword>
<keyword id="KW-0756">Sterol biosynthesis</keyword>
<keyword id="KW-1207">Sterol metabolism</keyword>
<keyword id="KW-0812">Transmembrane</keyword>
<keyword id="KW-1133">Transmembrane helix</keyword>
<comment type="function">
    <text evidence="4 7 8">Delta(14)-sterol reductase; part of the third module of ergosterol biosynthesis pathway that includes the late steps of the pathway (PubMed:33475797). Catalyzes the reduction of the C14=C15 double bond within 4,4,24-trimethyl ergosta-8,14,24(28)-trienolto produce 4,4-dimethylfecosterol (PubMed:33475797). The third module or late pathway involves the ergosterol synthesis itself through consecutive reactions that mainly occur in the endoplasmic reticulum (ER) membrane. Firstly, the squalene synthase erg9 catalyzes the condensation of 2 farnesyl pyrophosphate moieties to form squalene, which is the precursor of all steroids. Squalene synthase is crucial for balancing the incorporation of farnesyl diphosphate (FPP) into sterol and nonsterol isoprene synthesis. Secondly, squalene is converted into lanosterol by the consecutive action of the squalene epoxidase erg1 and the lanosterol synthase erg7. Then, the delta(24)-sterol C-methyltransferase erg6 methylates lanosterol at C-24 to produce eburicol. Eburicol is the substrate of the sterol 14-alpha demethylase encoded by cyp51A and cyp51B, to yield 4,4,24-trimethyl ergosta-8,14,24(28)-trienol. The C-14 reductase erg24 then reduces the C14=C15 double bond which leads to 4,4-dimethylfecosterol. A sequence of further demethylations at C-4, involving the C-4 demethylation complex containing the C-4 methylsterol oxidases erg25A or erg25B, the sterol-4-alpha-carboxylate 3-dehydrogenase erg26 and the 3-keto-steroid reductase erg27, leads to the production of fecosterol via 4-methylfecosterol. The C-8 sterol isomerase erg2 then catalyzes the reaction which results in unsaturation at C-7 in the B ring of sterols and thus converts fecosterol to episterol. The sterol-C5-desaturase erg3B then catalyzes the introduction of a C-5 double bond in the B ring to produce 5-dehydroepisterol. The 2 other sterol-C5-desaturases, erg3A and erg3C, seem to be less important in ergosterol biosynthesis. The C-22 sterol desaturase erg5 further converts 5-dehydroepisterol into ergosta-5,7,22,24(28)-tetraen-3beta-ol by forming the C-22(23) double bond in the sterol side chain. Finally, ergosta-5,7,22,24(28)-tetraen-3beta-ol is substrate of the C-24(28) sterol reductases erg4A and erg4B to produce ergosterol. Possible alternative sterol biosynthetic pathways might exist from fecosterol to ergosterol, depending on the activities of the erg3 isoforms (Probable) (PubMed:16110826, PubMed:18191972).</text>
</comment>
<comment type="pathway">
    <text evidence="7">Steroid metabolism; ergosterol biosynthesis.</text>
</comment>
<comment type="subcellular location">
    <subcellularLocation>
        <location evidence="4">Endoplasmic reticulum membrane</location>
        <topology evidence="2">Multi-pass membrane protein</topology>
    </subcellularLocation>
</comment>
<comment type="disruption phenotype">
    <text evidence="4">Results in decreased hyphal growth and virulence; as well as to hypersensitivity to azole drugs (PubMed:33475797). Deletion of both erg24A and erg24B affects ergosterol biosynthesis and leads to the accumulation of the intermediate 4,4-dimethylcholesta-8,12,24-trienol (PubMed:33475797).</text>
</comment>
<comment type="miscellaneous">
    <text evidence="8">In Aspergillus, the biosynthesis pathway of the sterol precursors leading to the prevalent sterol ergosterol differs from yeast. The ring system of lanosterol in S.cerevisiae is firstly demethylised in three enzymatic steps leading to the intermediate zymosterol and secondly a methyl group is added to zymosterol by the sterol 24-C-methyltransferase to form fecosterol. In Aspergillus, lanosterol is firstly transmethylated by the sterol 24-C-methyltransferase leading to the intermediate eburicol and secondly demethylated in three steps to form fecosterol.</text>
</comment>
<comment type="similarity">
    <text evidence="6">Belongs to the ERG4/ERG24 family.</text>
</comment>
<proteinExistence type="evidence at protein level"/>
<feature type="chain" id="PRO_0000454122" description="Delta(14)-sterol reductase erg24A">
    <location>
        <begin position="1"/>
        <end position="498"/>
    </location>
</feature>
<feature type="transmembrane region" description="Helical" evidence="2">
    <location>
        <begin position="30"/>
        <end position="50"/>
    </location>
</feature>
<feature type="transmembrane region" description="Helical" evidence="2">
    <location>
        <begin position="91"/>
        <end position="111"/>
    </location>
</feature>
<feature type="transmembrane region" description="Helical" evidence="2">
    <location>
        <begin position="136"/>
        <end position="156"/>
    </location>
</feature>
<feature type="transmembrane region" description="Helical" evidence="2">
    <location>
        <begin position="163"/>
        <end position="183"/>
    </location>
</feature>
<feature type="transmembrane region" description="Helical" evidence="2">
    <location>
        <begin position="275"/>
        <end position="295"/>
    </location>
</feature>
<feature type="transmembrane region" description="Helical" evidence="2">
    <location>
        <begin position="302"/>
        <end position="322"/>
    </location>
</feature>
<feature type="transmembrane region" description="Helical" evidence="2">
    <location>
        <begin position="339"/>
        <end position="359"/>
    </location>
</feature>
<feature type="transmembrane region" description="Helical" evidence="2">
    <location>
        <begin position="444"/>
        <end position="464"/>
    </location>
</feature>
<feature type="binding site" evidence="1">
    <location>
        <position position="363"/>
    </location>
    <ligand>
        <name>NADP(+)</name>
        <dbReference type="ChEBI" id="CHEBI:58349"/>
    </ligand>
</feature>
<feature type="binding site" evidence="1">
    <location>
        <position position="367"/>
    </location>
    <ligand>
        <name>NADP(+)</name>
        <dbReference type="ChEBI" id="CHEBI:58349"/>
    </ligand>
</feature>
<feature type="binding site" evidence="1">
    <location>
        <position position="395"/>
    </location>
    <ligand>
        <name>NADP(+)</name>
        <dbReference type="ChEBI" id="CHEBI:58349"/>
    </ligand>
</feature>
<feature type="binding site" evidence="1">
    <location>
        <begin position="402"/>
        <end position="403"/>
    </location>
    <ligand>
        <name>NADP(+)</name>
        <dbReference type="ChEBI" id="CHEBI:58349"/>
    </ligand>
</feature>
<feature type="binding site" evidence="1">
    <location>
        <position position="470"/>
    </location>
    <ligand>
        <name>NADP(+)</name>
        <dbReference type="ChEBI" id="CHEBI:58349"/>
    </ligand>
</feature>
<feature type="binding site" evidence="1">
    <location>
        <begin position="474"/>
        <end position="478"/>
    </location>
    <ligand>
        <name>NADP(+)</name>
        <dbReference type="ChEBI" id="CHEBI:58349"/>
    </ligand>
</feature>
<feature type="binding site" evidence="1">
    <location>
        <position position="485"/>
    </location>
    <ligand>
        <name>NADP(+)</name>
        <dbReference type="ChEBI" id="CHEBI:58349"/>
    </ligand>
</feature>
<feature type="glycosylation site" description="N-linked (GlcNAc...) asparagine" evidence="3">
    <location>
        <position position="257"/>
    </location>
</feature>
<feature type="glycosylation site" description="N-linked (GlcNAc...) asparagine" evidence="3">
    <location>
        <position position="429"/>
    </location>
</feature>
<gene>
    <name evidence="5" type="primary">erg24A</name>
    <name type="ORF">AFUA_1G03150</name>
</gene>
<protein>
    <recommendedName>
        <fullName evidence="5">Delta(14)-sterol reductase erg24A</fullName>
        <ecNumber evidence="4">1.3.1.-</ecNumber>
    </recommendedName>
    <alternativeName>
        <fullName evidence="5">C-14 sterol reductase erg24A</fullName>
    </alternativeName>
    <alternativeName>
        <fullName evidence="5">Ergosterol biosynthesis protein 24A</fullName>
    </alternativeName>
    <alternativeName>
        <fullName evidence="5">Sterol C14-reductase erg24A</fullName>
    </alternativeName>
</protein>
<sequence length="498" mass="56389">MAPRKDFEDKATVPIQPVPGKRGYEFGGPLGAFVFIFGLSTLIYCLTFLCNDVSGCPVPSLLNPSTLSLDKLKEEAGWPQEGLKAFFDVRVTVWVLSYYVLSLVLYVFLPGEVVEGTELACKGRLRYKFNALPSAILILGGLALGTYMHGADFVVWTFLWDNYVQIITANLIICVVLAIFVYARSFSIPAPGQPNPELRELAPGGHSGNALYDFFIGRELNPRVQLPIPFVDEASRTIDINVWCEMRPGLLGWIILNLSNIARQYRTYGYITNSIVLSTVFQTFYVLDALYMEPAVLTTMDVIMDGFGYMLSFGHLVWVPFIYNIQTRYLAVFPLELRLREILLILAVTGAGYAIFRGANNQKNRFRRDPSDPRMMHIKYIQTSSGSKLMISGWWGLARHINYLGDWLMSWSYSLPTGIAGYTIIESINSSGDMQKQAIQTPEVRGWGMIFTYFFLVYFGALLIHREGRDEEKCKSKYGTDWERYTSIVRSRIIPGIY</sequence>
<name>ER24A_ASPFU</name>
<reference key="1">
    <citation type="journal article" date="2005" name="Nature">
        <title>Genomic sequence of the pathogenic and allergenic filamentous fungus Aspergillus fumigatus.</title>
        <authorList>
            <person name="Nierman W.C."/>
            <person name="Pain A."/>
            <person name="Anderson M.J."/>
            <person name="Wortman J.R."/>
            <person name="Kim H.S."/>
            <person name="Arroyo J."/>
            <person name="Berriman M."/>
            <person name="Abe K."/>
            <person name="Archer D.B."/>
            <person name="Bermejo C."/>
            <person name="Bennett J.W."/>
            <person name="Bowyer P."/>
            <person name="Chen D."/>
            <person name="Collins M."/>
            <person name="Coulsen R."/>
            <person name="Davies R."/>
            <person name="Dyer P.S."/>
            <person name="Farman M.L."/>
            <person name="Fedorova N."/>
            <person name="Fedorova N.D."/>
            <person name="Feldblyum T.V."/>
            <person name="Fischer R."/>
            <person name="Fosker N."/>
            <person name="Fraser A."/>
            <person name="Garcia J.L."/>
            <person name="Garcia M.J."/>
            <person name="Goble A."/>
            <person name="Goldman G.H."/>
            <person name="Gomi K."/>
            <person name="Griffith-Jones S."/>
            <person name="Gwilliam R."/>
            <person name="Haas B.J."/>
            <person name="Haas H."/>
            <person name="Harris D.E."/>
            <person name="Horiuchi H."/>
            <person name="Huang J."/>
            <person name="Humphray S."/>
            <person name="Jimenez J."/>
            <person name="Keller N."/>
            <person name="Khouri H."/>
            <person name="Kitamoto K."/>
            <person name="Kobayashi T."/>
            <person name="Konzack S."/>
            <person name="Kulkarni R."/>
            <person name="Kumagai T."/>
            <person name="Lafton A."/>
            <person name="Latge J.-P."/>
            <person name="Li W."/>
            <person name="Lord A."/>
            <person name="Lu C."/>
            <person name="Majoros W.H."/>
            <person name="May G.S."/>
            <person name="Miller B.L."/>
            <person name="Mohamoud Y."/>
            <person name="Molina M."/>
            <person name="Monod M."/>
            <person name="Mouyna I."/>
            <person name="Mulligan S."/>
            <person name="Murphy L.D."/>
            <person name="O'Neil S."/>
            <person name="Paulsen I."/>
            <person name="Penalva M.A."/>
            <person name="Pertea M."/>
            <person name="Price C."/>
            <person name="Pritchard B.L."/>
            <person name="Quail M.A."/>
            <person name="Rabbinowitsch E."/>
            <person name="Rawlins N."/>
            <person name="Rajandream M.A."/>
            <person name="Reichard U."/>
            <person name="Renauld H."/>
            <person name="Robson G.D."/>
            <person name="Rodriguez de Cordoba S."/>
            <person name="Rodriguez-Pena J.M."/>
            <person name="Ronning C.M."/>
            <person name="Rutter S."/>
            <person name="Salzberg S.L."/>
            <person name="Sanchez M."/>
            <person name="Sanchez-Ferrero J.C."/>
            <person name="Saunders D."/>
            <person name="Seeger K."/>
            <person name="Squares R."/>
            <person name="Squares S."/>
            <person name="Takeuchi M."/>
            <person name="Tekaia F."/>
            <person name="Turner G."/>
            <person name="Vazquez de Aldana C.R."/>
            <person name="Weidman J."/>
            <person name="White O."/>
            <person name="Woodward J.R."/>
            <person name="Yu J.-H."/>
            <person name="Fraser C.M."/>
            <person name="Galagan J.E."/>
            <person name="Asai K."/>
            <person name="Machida M."/>
            <person name="Hall N."/>
            <person name="Barrell B.G."/>
            <person name="Denning D.W."/>
        </authorList>
    </citation>
    <scope>NUCLEOTIDE SEQUENCE [LARGE SCALE GENOMIC DNA]</scope>
    <source>
        <strain>ATCC MYA-4609 / CBS 101355 / FGSC A1100 / Af293</strain>
    </source>
</reference>
<reference key="2">
    <citation type="journal article" date="2005" name="Med. Mycol.">
        <title>The ergosterol biosynthesis pathway, transporter genes, and azole resistance in Aspergillus fumigatus.</title>
        <authorList>
            <person name="Ferreira M.E."/>
            <person name="Colombo A.L."/>
            <person name="Paulsen I."/>
            <person name="Ren Q."/>
            <person name="Wortman J."/>
            <person name="Huang J."/>
            <person name="Goldman M.H."/>
            <person name="Goldman G.H."/>
        </authorList>
    </citation>
    <scope>IDENTIFICATION</scope>
    <scope>FUNCTION</scope>
    <scope>PATHWAY</scope>
</reference>
<reference key="3">
    <citation type="journal article" date="2008" name="Steroids">
        <title>Ergosterol biosynthesis pathway in Aspergillus fumigatus.</title>
        <authorList>
            <person name="Alcazar-Fuoli L."/>
            <person name="Mellado E."/>
            <person name="Garcia-Effron G."/>
            <person name="Lopez J.F."/>
            <person name="Grimalt J.O."/>
            <person name="Cuenca-Estrella J.M."/>
            <person name="Rodriguez-Tudela J.L."/>
        </authorList>
    </citation>
    <scope>FUNCTION</scope>
</reference>
<reference key="4">
    <citation type="journal article" date="2021" name="Appl. Microbiol. Biotechnol.">
        <title>The sterol C-14 reductase Erg24 is responsible for ergosterol biosynthesis and ion homeostasis in Aspergillus fumigatus.</title>
        <authorList>
            <person name="Li Y."/>
            <person name="Dai M."/>
            <person name="Zhang Y."/>
            <person name="Lu L."/>
        </authorList>
    </citation>
    <scope>FUNCTION</scope>
    <scope>DISRUPTION PHENOTYPE</scope>
    <scope>CATALYTIC ACTIVITY</scope>
    <scope>SUBCELLULAR LOCATION</scope>
    <scope>PATHWAY</scope>
</reference>
<evidence type="ECO:0000250" key="1">
    <source>
        <dbReference type="UniProtKB" id="G4SW86"/>
    </source>
</evidence>
<evidence type="ECO:0000255" key="2"/>
<evidence type="ECO:0000255" key="3">
    <source>
        <dbReference type="PROSITE-ProRule" id="PRU00498"/>
    </source>
</evidence>
<evidence type="ECO:0000269" key="4">
    <source>
    </source>
</evidence>
<evidence type="ECO:0000303" key="5">
    <source>
    </source>
</evidence>
<evidence type="ECO:0000305" key="6"/>
<evidence type="ECO:0000305" key="7">
    <source>
    </source>
</evidence>
<evidence type="ECO:0000305" key="8">
    <source>
    </source>
</evidence>
<accession>Q4WKA5</accession>